<proteinExistence type="inferred from homology"/>
<name>YGIW_ECO57</name>
<dbReference type="EMBL" id="AE005174">
    <property type="protein sequence ID" value="AAG58158.1"/>
    <property type="molecule type" value="Genomic_DNA"/>
</dbReference>
<dbReference type="EMBL" id="BA000007">
    <property type="protein sequence ID" value="BAB37329.1"/>
    <property type="molecule type" value="Genomic_DNA"/>
</dbReference>
<dbReference type="PIR" id="B85962">
    <property type="entry name" value="B85962"/>
</dbReference>
<dbReference type="PIR" id="B91117">
    <property type="entry name" value="B91117"/>
</dbReference>
<dbReference type="RefSeq" id="NP_311933.1">
    <property type="nucleotide sequence ID" value="NC_002695.1"/>
</dbReference>
<dbReference type="RefSeq" id="WP_000712658.1">
    <property type="nucleotide sequence ID" value="NZ_VOAI01000009.1"/>
</dbReference>
<dbReference type="SMR" id="P0ADU6"/>
<dbReference type="STRING" id="155864.Z4376"/>
<dbReference type="GeneID" id="916268"/>
<dbReference type="GeneID" id="93778968"/>
<dbReference type="KEGG" id="ece:Z4376"/>
<dbReference type="KEGG" id="ecs:ECs_3906"/>
<dbReference type="PATRIC" id="fig|386585.9.peg.4074"/>
<dbReference type="eggNOG" id="COG3111">
    <property type="taxonomic scope" value="Bacteria"/>
</dbReference>
<dbReference type="HOGENOM" id="CLU_118907_1_0_6"/>
<dbReference type="OMA" id="KHLMSRE"/>
<dbReference type="Proteomes" id="UP000000558">
    <property type="component" value="Chromosome"/>
</dbReference>
<dbReference type="Proteomes" id="UP000002519">
    <property type="component" value="Chromosome"/>
</dbReference>
<dbReference type="GO" id="GO:0042597">
    <property type="term" value="C:periplasmic space"/>
    <property type="evidence" value="ECO:0007669"/>
    <property type="project" value="UniProtKB-SubCell"/>
</dbReference>
<dbReference type="FunFam" id="2.40.50.200:FF:000001">
    <property type="entry name" value="TIGR00156 family protein"/>
    <property type="match status" value="1"/>
</dbReference>
<dbReference type="Gene3D" id="2.40.50.200">
    <property type="entry name" value="Bacterial OB-fold"/>
    <property type="match status" value="1"/>
</dbReference>
<dbReference type="InterPro" id="IPR036700">
    <property type="entry name" value="BOBF_sf"/>
</dbReference>
<dbReference type="InterPro" id="IPR005220">
    <property type="entry name" value="BOF"/>
</dbReference>
<dbReference type="InterPro" id="IPR052401">
    <property type="entry name" value="Ca-regulated_OB-fold"/>
</dbReference>
<dbReference type="InterPro" id="IPR016052">
    <property type="entry name" value="YgiW/YdeI"/>
</dbReference>
<dbReference type="NCBIfam" id="NF033674">
    <property type="entry name" value="stress_OB_fold"/>
    <property type="match status" value="1"/>
</dbReference>
<dbReference type="NCBIfam" id="TIGR00156">
    <property type="entry name" value="YgiW/YdeI family stress tolerance OB fold protein"/>
    <property type="match status" value="1"/>
</dbReference>
<dbReference type="PANTHER" id="PTHR36571">
    <property type="entry name" value="PROTEIN YGIW"/>
    <property type="match status" value="1"/>
</dbReference>
<dbReference type="PANTHER" id="PTHR36571:SF1">
    <property type="entry name" value="PROTEIN YGIW"/>
    <property type="match status" value="1"/>
</dbReference>
<dbReference type="Pfam" id="PF04076">
    <property type="entry name" value="BOF"/>
    <property type="match status" value="1"/>
</dbReference>
<dbReference type="SUPFAM" id="SSF101756">
    <property type="entry name" value="Hypothetical protein YgiW"/>
    <property type="match status" value="1"/>
</dbReference>
<comment type="subcellular location">
    <subcellularLocation>
        <location evidence="3">Periplasm</location>
    </subcellularLocation>
</comment>
<comment type="similarity">
    <text evidence="3">To H.influenzae HI_1709.</text>
</comment>
<keyword id="KW-0574">Periplasm</keyword>
<keyword id="KW-1185">Reference proteome</keyword>
<keyword id="KW-0732">Signal</keyword>
<feature type="signal peptide" evidence="1">
    <location>
        <begin position="1"/>
        <end position="20"/>
    </location>
</feature>
<feature type="chain" id="PRO_0000043108" description="Protein YgiW">
    <location>
        <begin position="21"/>
        <end position="130"/>
    </location>
</feature>
<feature type="region of interest" description="Disordered" evidence="2">
    <location>
        <begin position="25"/>
        <end position="44"/>
    </location>
</feature>
<feature type="compositionally biased region" description="Polar residues" evidence="2">
    <location>
        <begin position="29"/>
        <end position="44"/>
    </location>
</feature>
<gene>
    <name type="primary">ygiW</name>
    <name type="ordered locus">Z4376</name>
    <name type="ordered locus">ECs3906</name>
</gene>
<sequence>MKKFAAVIAVMALCSAPVMAAEQGGFSGPSATQSQAGGFQGPNGSVTTVESAKSLRDDTWVTLRGNIVERISDDLYVFKDASGTINVDIDHKRWNGVTVTPKDTVEIQGEVDKDWNSVEIDVKQIRKVNP</sequence>
<accession>P0ADU6</accession>
<accession>P52083</accession>
<reference key="1">
    <citation type="journal article" date="2001" name="Nature">
        <title>Genome sequence of enterohaemorrhagic Escherichia coli O157:H7.</title>
        <authorList>
            <person name="Perna N.T."/>
            <person name="Plunkett G. III"/>
            <person name="Burland V."/>
            <person name="Mau B."/>
            <person name="Glasner J.D."/>
            <person name="Rose D.J."/>
            <person name="Mayhew G.F."/>
            <person name="Evans P.S."/>
            <person name="Gregor J."/>
            <person name="Kirkpatrick H.A."/>
            <person name="Posfai G."/>
            <person name="Hackett J."/>
            <person name="Klink S."/>
            <person name="Boutin A."/>
            <person name="Shao Y."/>
            <person name="Miller L."/>
            <person name="Grotbeck E.J."/>
            <person name="Davis N.W."/>
            <person name="Lim A."/>
            <person name="Dimalanta E.T."/>
            <person name="Potamousis K."/>
            <person name="Apodaca J."/>
            <person name="Anantharaman T.S."/>
            <person name="Lin J."/>
            <person name="Yen G."/>
            <person name="Schwartz D.C."/>
            <person name="Welch R.A."/>
            <person name="Blattner F.R."/>
        </authorList>
    </citation>
    <scope>NUCLEOTIDE SEQUENCE [LARGE SCALE GENOMIC DNA]</scope>
    <source>
        <strain>O157:H7 / EDL933 / ATCC 700927 / EHEC</strain>
    </source>
</reference>
<reference key="2">
    <citation type="journal article" date="2001" name="DNA Res.">
        <title>Complete genome sequence of enterohemorrhagic Escherichia coli O157:H7 and genomic comparison with a laboratory strain K-12.</title>
        <authorList>
            <person name="Hayashi T."/>
            <person name="Makino K."/>
            <person name="Ohnishi M."/>
            <person name="Kurokawa K."/>
            <person name="Ishii K."/>
            <person name="Yokoyama K."/>
            <person name="Han C.-G."/>
            <person name="Ohtsubo E."/>
            <person name="Nakayama K."/>
            <person name="Murata T."/>
            <person name="Tanaka M."/>
            <person name="Tobe T."/>
            <person name="Iida T."/>
            <person name="Takami H."/>
            <person name="Honda T."/>
            <person name="Sasakawa C."/>
            <person name="Ogasawara N."/>
            <person name="Yasunaga T."/>
            <person name="Kuhara S."/>
            <person name="Shiba T."/>
            <person name="Hattori M."/>
            <person name="Shinagawa H."/>
        </authorList>
    </citation>
    <scope>NUCLEOTIDE SEQUENCE [LARGE SCALE GENOMIC DNA]</scope>
    <source>
        <strain>O157:H7 / Sakai / RIMD 0509952 / EHEC</strain>
    </source>
</reference>
<organism>
    <name type="scientific">Escherichia coli O157:H7</name>
    <dbReference type="NCBI Taxonomy" id="83334"/>
    <lineage>
        <taxon>Bacteria</taxon>
        <taxon>Pseudomonadati</taxon>
        <taxon>Pseudomonadota</taxon>
        <taxon>Gammaproteobacteria</taxon>
        <taxon>Enterobacterales</taxon>
        <taxon>Enterobacteriaceae</taxon>
        <taxon>Escherichia</taxon>
    </lineage>
</organism>
<evidence type="ECO:0000250" key="1"/>
<evidence type="ECO:0000256" key="2">
    <source>
        <dbReference type="SAM" id="MobiDB-lite"/>
    </source>
</evidence>
<evidence type="ECO:0000305" key="3"/>
<protein>
    <recommendedName>
        <fullName>Protein YgiW</fullName>
    </recommendedName>
</protein>